<comment type="function">
    <text>Transferrins are iron binding transport proteins which can bind two Fe(3+) ions in association with the binding of an anion, usually bicarbonate. It is responsible for the transport of iron from sites of absorption and heme degradation to those of storage and utilization. Serum transferrin may also have a further role in stimulating cell proliferation.</text>
</comment>
<comment type="subunit">
    <text evidence="1">Monomer. Part of a complex composed of SLC40A1/ferroportin, TF/transferrin and HEPH/hephaestin that transfers iron from cells to transferrin.</text>
</comment>
<comment type="subcellular location">
    <subcellularLocation>
        <location>Secreted</location>
    </subcellularLocation>
</comment>
<comment type="tissue specificity">
    <text>Expressed by the liver and secreted in plasma.</text>
</comment>
<comment type="similarity">
    <text evidence="4">Belongs to the transferrin family.</text>
</comment>
<gene>
    <name type="primary">TF</name>
</gene>
<feature type="chain" id="PRO_0000082439" description="Serotransferrin">
    <location>
        <begin position="1"/>
        <end position="696"/>
    </location>
</feature>
<feature type="domain" description="Transferrin-like 1" evidence="4">
    <location>
        <begin position="6"/>
        <end position="332"/>
    </location>
</feature>
<feature type="domain" description="Transferrin-like 2" evidence="4">
    <location>
        <begin position="346"/>
        <end position="672"/>
    </location>
</feature>
<feature type="binding site" evidence="4">
    <location>
        <position position="62"/>
    </location>
    <ligand>
        <name>Fe(3+)</name>
        <dbReference type="ChEBI" id="CHEBI:29034"/>
        <label>1</label>
    </ligand>
</feature>
<feature type="binding site" evidence="4">
    <location>
        <position position="94"/>
    </location>
    <ligand>
        <name>Fe(3+)</name>
        <dbReference type="ChEBI" id="CHEBI:29034"/>
        <label>1</label>
    </ligand>
</feature>
<feature type="binding site" evidence="4">
    <location>
        <position position="119"/>
    </location>
    <ligand>
        <name>hydrogencarbonate</name>
        <dbReference type="ChEBI" id="CHEBI:17544"/>
        <label>1</label>
    </ligand>
</feature>
<feature type="binding site" evidence="4">
    <location>
        <position position="123"/>
    </location>
    <ligand>
        <name>hydrogencarbonate</name>
        <dbReference type="ChEBI" id="CHEBI:17544"/>
        <label>1</label>
    </ligand>
</feature>
<feature type="binding site" evidence="4">
    <location>
        <position position="125"/>
    </location>
    <ligand>
        <name>hydrogencarbonate</name>
        <dbReference type="ChEBI" id="CHEBI:17544"/>
        <label>1</label>
    </ligand>
</feature>
<feature type="binding site" evidence="4">
    <location>
        <position position="126"/>
    </location>
    <ligand>
        <name>hydrogencarbonate</name>
        <dbReference type="ChEBI" id="CHEBI:17544"/>
        <label>1</label>
    </ligand>
</feature>
<feature type="binding site" evidence="4">
    <location>
        <position position="192"/>
    </location>
    <ligand>
        <name>Fe(3+)</name>
        <dbReference type="ChEBI" id="CHEBI:29034"/>
        <label>1</label>
    </ligand>
</feature>
<feature type="binding site" evidence="4">
    <location>
        <position position="253"/>
    </location>
    <ligand>
        <name>Fe(3+)</name>
        <dbReference type="ChEBI" id="CHEBI:29034"/>
        <label>1</label>
    </ligand>
</feature>
<feature type="binding site" evidence="4">
    <location>
        <position position="396"/>
    </location>
    <ligand>
        <name>Fe(3+)</name>
        <dbReference type="ChEBI" id="CHEBI:29034"/>
        <label>2</label>
    </ligand>
</feature>
<feature type="binding site" evidence="4">
    <location>
        <position position="431"/>
    </location>
    <ligand>
        <name>Fe(3+)</name>
        <dbReference type="ChEBI" id="CHEBI:29034"/>
        <label>2</label>
    </ligand>
</feature>
<feature type="binding site" evidence="4">
    <location>
        <position position="458"/>
    </location>
    <ligand>
        <name>hydrogencarbonate</name>
        <dbReference type="ChEBI" id="CHEBI:17544"/>
        <label>2</label>
    </ligand>
</feature>
<feature type="binding site" evidence="4">
    <location>
        <position position="462"/>
    </location>
    <ligand>
        <name>hydrogencarbonate</name>
        <dbReference type="ChEBI" id="CHEBI:17544"/>
        <label>2</label>
    </ligand>
</feature>
<feature type="binding site" evidence="4">
    <location>
        <position position="464"/>
    </location>
    <ligand>
        <name>hydrogencarbonate</name>
        <dbReference type="ChEBI" id="CHEBI:17544"/>
        <label>2</label>
    </ligand>
</feature>
<feature type="binding site" evidence="4">
    <location>
        <position position="465"/>
    </location>
    <ligand>
        <name>hydrogencarbonate</name>
        <dbReference type="ChEBI" id="CHEBI:17544"/>
        <label>2</label>
    </ligand>
</feature>
<feature type="binding site" evidence="4">
    <location>
        <position position="526"/>
    </location>
    <ligand>
        <name>Fe(3+)</name>
        <dbReference type="ChEBI" id="CHEBI:29034"/>
        <label>2</label>
    </ligand>
</feature>
<feature type="binding site" evidence="4">
    <location>
        <position position="594"/>
    </location>
    <ligand>
        <name>Fe(3+)</name>
        <dbReference type="ChEBI" id="CHEBI:29034"/>
        <label>2</label>
    </ligand>
</feature>
<feature type="modified residue" description="Dimethylated arginine" evidence="2">
    <location>
        <position position="23"/>
    </location>
</feature>
<feature type="modified residue" description="Phosphoserine" evidence="1">
    <location>
        <position position="374"/>
    </location>
</feature>
<feature type="modified residue" description="Phosphoserine" evidence="1">
    <location>
        <position position="674"/>
    </location>
</feature>
<feature type="glycosylation site" description="N-linked (GlcNAc...) asparagine" evidence="3">
    <location>
        <position position="25"/>
    </location>
</feature>
<feature type="glycosylation site" description="N-linked (GlcNAc...) asparagine" evidence="3">
    <location>
        <position position="497"/>
    </location>
</feature>
<feature type="disulfide bond" evidence="4">
    <location>
        <begin position="9"/>
        <end position="47"/>
    </location>
</feature>
<feature type="disulfide bond" evidence="4">
    <location>
        <begin position="19"/>
        <end position="38"/>
    </location>
</feature>
<feature type="disulfide bond" evidence="4">
    <location>
        <begin position="117"/>
        <end position="198"/>
    </location>
</feature>
<feature type="disulfide bond" evidence="4">
    <location>
        <begin position="157"/>
        <end position="173"/>
    </location>
</feature>
<feature type="disulfide bond" evidence="4">
    <location>
        <begin position="160"/>
        <end position="181"/>
    </location>
</feature>
<feature type="disulfide bond" evidence="4">
    <location>
        <begin position="170"/>
        <end position="183"/>
    </location>
</feature>
<feature type="disulfide bond" evidence="4">
    <location>
        <begin position="231"/>
        <end position="245"/>
    </location>
</feature>
<feature type="disulfide bond" evidence="4">
    <location>
        <begin position="343"/>
        <end position="605"/>
    </location>
</feature>
<feature type="disulfide bond" evidence="4">
    <location>
        <begin position="349"/>
        <end position="381"/>
    </location>
</feature>
<feature type="disulfide bond" evidence="4">
    <location>
        <begin position="359"/>
        <end position="372"/>
    </location>
</feature>
<feature type="disulfide bond" evidence="4">
    <location>
        <begin position="406"/>
        <end position="682"/>
    </location>
</feature>
<feature type="disulfide bond" evidence="4">
    <location>
        <begin position="423"/>
        <end position="646"/>
    </location>
</feature>
<feature type="disulfide bond" evidence="4">
    <location>
        <begin position="456"/>
        <end position="532"/>
    </location>
</feature>
<feature type="disulfide bond" evidence="4">
    <location>
        <begin position="480"/>
        <end position="673"/>
    </location>
</feature>
<feature type="disulfide bond" evidence="4">
    <location>
        <begin position="490"/>
        <end position="504"/>
    </location>
</feature>
<feature type="disulfide bond" evidence="4">
    <location>
        <begin position="501"/>
        <end position="515"/>
    </location>
</feature>
<feature type="disulfide bond" evidence="4">
    <location>
        <begin position="572"/>
        <end position="586"/>
    </location>
</feature>
<feature type="disulfide bond" evidence="4">
    <location>
        <begin position="624"/>
        <end position="629"/>
    </location>
</feature>
<feature type="sequence variant">
    <original>K</original>
    <variation>R</variation>
    <location>
        <position position="308"/>
    </location>
</feature>
<feature type="sequence conflict" description="In Ref. 2; AA sequence." evidence="5" ref="2">
    <original>S</original>
    <variation>E</variation>
    <location>
        <position position="20"/>
    </location>
</feature>
<feature type="strand" evidence="6">
    <location>
        <begin position="5"/>
        <end position="10"/>
    </location>
</feature>
<feature type="helix" evidence="6">
    <location>
        <begin position="13"/>
        <end position="29"/>
    </location>
</feature>
<feature type="strand" evidence="6">
    <location>
        <begin position="31"/>
        <end position="33"/>
    </location>
</feature>
<feature type="strand" evidence="6">
    <location>
        <begin position="35"/>
        <end position="40"/>
    </location>
</feature>
<feature type="helix" evidence="6">
    <location>
        <begin position="44"/>
        <end position="52"/>
    </location>
</feature>
<feature type="strand" evidence="6">
    <location>
        <begin position="58"/>
        <end position="61"/>
    </location>
</feature>
<feature type="helix" evidence="6">
    <location>
        <begin position="63"/>
        <end position="69"/>
    </location>
</feature>
<feature type="turn" evidence="6">
    <location>
        <begin position="72"/>
        <end position="74"/>
    </location>
</feature>
<feature type="strand" evidence="6">
    <location>
        <begin position="76"/>
        <end position="85"/>
    </location>
</feature>
<feature type="strand" evidence="6">
    <location>
        <begin position="91"/>
        <end position="101"/>
    </location>
</feature>
<feature type="helix" evidence="6">
    <location>
        <begin position="108"/>
        <end position="110"/>
    </location>
</feature>
<feature type="strand" evidence="6">
    <location>
        <begin position="115"/>
        <end position="119"/>
    </location>
</feature>
<feature type="turn" evidence="6">
    <location>
        <begin position="124"/>
        <end position="127"/>
    </location>
</feature>
<feature type="helix" evidence="6">
    <location>
        <begin position="128"/>
        <end position="134"/>
    </location>
</feature>
<feature type="helix" evidence="6">
    <location>
        <begin position="135"/>
        <end position="137"/>
    </location>
</feature>
<feature type="helix" evidence="6">
    <location>
        <begin position="145"/>
        <end position="152"/>
    </location>
</feature>
<feature type="strand" evidence="6">
    <location>
        <begin position="153"/>
        <end position="157"/>
    </location>
</feature>
<feature type="turn" evidence="6">
    <location>
        <begin position="163"/>
        <end position="165"/>
    </location>
</feature>
<feature type="helix" evidence="6">
    <location>
        <begin position="167"/>
        <end position="170"/>
    </location>
</feature>
<feature type="helix" evidence="6">
    <location>
        <begin position="177"/>
        <end position="179"/>
    </location>
</feature>
<feature type="helix" evidence="6">
    <location>
        <begin position="191"/>
        <end position="200"/>
    </location>
</feature>
<feature type="strand" evidence="6">
    <location>
        <begin position="205"/>
        <end position="210"/>
    </location>
</feature>
<feature type="helix" evidence="6">
    <location>
        <begin position="213"/>
        <end position="217"/>
    </location>
</feature>
<feature type="helix" evidence="6">
    <location>
        <begin position="224"/>
        <end position="226"/>
    </location>
</feature>
<feature type="strand" evidence="6">
    <location>
        <begin position="227"/>
        <end position="230"/>
    </location>
</feature>
<feature type="strand" evidence="6">
    <location>
        <begin position="236"/>
        <end position="238"/>
    </location>
</feature>
<feature type="helix" evidence="6">
    <location>
        <begin position="239"/>
        <end position="244"/>
    </location>
</feature>
<feature type="strand" evidence="6">
    <location>
        <begin position="247"/>
        <end position="251"/>
    </location>
</feature>
<feature type="strand" evidence="6">
    <location>
        <begin position="254"/>
        <end position="261"/>
    </location>
</feature>
<feature type="helix" evidence="6">
    <location>
        <begin position="264"/>
        <end position="278"/>
    </location>
</feature>
<feature type="strand" evidence="6">
    <location>
        <begin position="295"/>
        <end position="299"/>
    </location>
</feature>
<feature type="strand" evidence="6">
    <location>
        <begin position="305"/>
        <end position="308"/>
    </location>
</feature>
<feature type="helix" evidence="6">
    <location>
        <begin position="315"/>
        <end position="319"/>
    </location>
</feature>
<feature type="helix" evidence="6">
    <location>
        <begin position="321"/>
        <end position="331"/>
    </location>
</feature>
<feature type="strand" evidence="6">
    <location>
        <begin position="346"/>
        <end position="351"/>
    </location>
</feature>
<feature type="helix" evidence="6">
    <location>
        <begin position="352"/>
        <end position="365"/>
    </location>
</feature>
<feature type="turn" evidence="6">
    <location>
        <begin position="366"/>
        <end position="368"/>
    </location>
</feature>
<feature type="strand" evidence="6">
    <location>
        <begin position="369"/>
        <end position="377"/>
    </location>
</feature>
<feature type="helix" evidence="6">
    <location>
        <begin position="378"/>
        <end position="386"/>
    </location>
</feature>
<feature type="strand" evidence="6">
    <location>
        <begin position="392"/>
        <end position="395"/>
    </location>
</feature>
<feature type="helix" evidence="6">
    <location>
        <begin position="397"/>
        <end position="405"/>
    </location>
</feature>
<feature type="strand" evidence="6">
    <location>
        <begin position="409"/>
        <end position="417"/>
    </location>
</feature>
<feature type="helix" evidence="6">
    <location>
        <begin position="423"/>
        <end position="425"/>
    </location>
</feature>
<feature type="strand" evidence="6">
    <location>
        <begin position="431"/>
        <end position="438"/>
    </location>
</feature>
<feature type="helix" evidence="6">
    <location>
        <begin position="447"/>
        <end position="449"/>
    </location>
</feature>
<feature type="strand" evidence="6">
    <location>
        <begin position="455"/>
        <end position="458"/>
    </location>
</feature>
<feature type="turn" evidence="6">
    <location>
        <begin position="463"/>
        <end position="466"/>
    </location>
</feature>
<feature type="helix" evidence="6">
    <location>
        <begin position="467"/>
        <end position="477"/>
    </location>
</feature>
<feature type="helix" evidence="6">
    <location>
        <begin position="482"/>
        <end position="485"/>
    </location>
</feature>
<feature type="strand" evidence="6">
    <location>
        <begin position="486"/>
        <end position="488"/>
    </location>
</feature>
<feature type="helix" evidence="6">
    <location>
        <begin position="499"/>
        <end position="501"/>
    </location>
</feature>
<feature type="strand" evidence="6">
    <location>
        <begin position="508"/>
        <end position="510"/>
    </location>
</feature>
<feature type="helix" evidence="6">
    <location>
        <begin position="525"/>
        <end position="535"/>
    </location>
</feature>
<feature type="strand" evidence="6">
    <location>
        <begin position="538"/>
        <end position="543"/>
    </location>
</feature>
<feature type="helix" evidence="6">
    <location>
        <begin position="546"/>
        <end position="549"/>
    </location>
</feature>
<feature type="turn" evidence="6">
    <location>
        <begin position="558"/>
        <end position="562"/>
    </location>
</feature>
<feature type="helix" evidence="6">
    <location>
        <begin position="565"/>
        <end position="567"/>
    </location>
</feature>
<feature type="strand" evidence="6">
    <location>
        <begin position="568"/>
        <end position="571"/>
    </location>
</feature>
<feature type="strand" evidence="6">
    <location>
        <begin position="577"/>
        <end position="579"/>
    </location>
</feature>
<feature type="helix" evidence="6">
    <location>
        <begin position="580"/>
        <end position="585"/>
    </location>
</feature>
<feature type="strand" evidence="6">
    <location>
        <begin position="588"/>
        <end position="591"/>
    </location>
</feature>
<feature type="strand" evidence="6">
    <location>
        <begin position="595"/>
        <end position="598"/>
    </location>
</feature>
<feature type="helix" evidence="6">
    <location>
        <begin position="600"/>
        <end position="602"/>
    </location>
</feature>
<feature type="helix" evidence="6">
    <location>
        <begin position="603"/>
        <end position="617"/>
    </location>
</feature>
<feature type="strand" evidence="6">
    <location>
        <begin position="634"/>
        <end position="637"/>
    </location>
</feature>
<feature type="strand" evidence="6">
    <location>
        <begin position="646"/>
        <end position="649"/>
    </location>
</feature>
<feature type="helix" evidence="6">
    <location>
        <begin position="655"/>
        <end position="659"/>
    </location>
</feature>
<feature type="helix" evidence="6">
    <location>
        <begin position="661"/>
        <end position="669"/>
    </location>
</feature>
<feature type="helix" evidence="6">
    <location>
        <begin position="670"/>
        <end position="673"/>
    </location>
</feature>
<feature type="helix" evidence="6">
    <location>
        <begin position="677"/>
        <end position="682"/>
    </location>
</feature>
<reference key="1">
    <citation type="journal article" date="1988" name="Nucleic Acids Res.">
        <title>Nucleotide sequence of porcine liver transferrin.</title>
        <authorList>
            <person name="Baldwin G.S."/>
            <person name="Weinstock J."/>
        </authorList>
    </citation>
    <scope>NUCLEOTIDE SEQUENCE [MRNA]</scope>
    <source>
        <tissue>Liver</tissue>
    </source>
</reference>
<reference key="2">
    <citation type="journal article" date="1991" name="Int. J. Biochem.">
        <title>Purification of transferrins and lactoferrin using DEAE affi-gel blue.</title>
        <authorList>
            <person name="Chung M.C."/>
            <person name="Chan S.L."/>
            <person name="Shimizu S."/>
        </authorList>
    </citation>
    <scope>PROTEIN SEQUENCE OF 1-20</scope>
</reference>
<reference key="3">
    <citation type="journal article" date="1990" name="Comp. Biochem. Physiol.">
        <title>Isolation of transferrin from porcine gastric mucosa: comparison with porcine serum transferrin.</title>
        <authorList>
            <person name="Baldwin G.S."/>
            <person name="Bacic T."/>
            <person name="Chandler R."/>
            <person name="Grego B."/>
            <person name="Pedersen J."/>
            <person name="Simpson R.J."/>
            <person name="Toh B.H."/>
            <person name="Weinstock J."/>
        </authorList>
    </citation>
    <scope>PROTEIN SEQUENCE OF 1-15</scope>
</reference>
<reference key="4">
    <citation type="journal article" date="2002" name="Acta Crystallogr. D">
        <title>The crystal and molecular structures of diferric porcine and rabbit serum transferrins at resolutions of 2.15 and 2.60 A, respectively.</title>
        <authorList>
            <person name="Hall D.R."/>
            <person name="Hadden J.M."/>
            <person name="Leonard G.A."/>
            <person name="Bailey S."/>
            <person name="Neu M."/>
            <person name="Winn M."/>
            <person name="Lindley P.F."/>
        </authorList>
    </citation>
    <scope>X-RAY CRYSTALLOGRAPHY (2.15 ANGSTROMS)</scope>
</reference>
<keyword id="KW-0002">3D-structure</keyword>
<keyword id="KW-0903">Direct protein sequencing</keyword>
<keyword id="KW-1015">Disulfide bond</keyword>
<keyword id="KW-0325">Glycoprotein</keyword>
<keyword id="KW-0406">Ion transport</keyword>
<keyword id="KW-0408">Iron</keyword>
<keyword id="KW-0410">Iron transport</keyword>
<keyword id="KW-0479">Metal-binding</keyword>
<keyword id="KW-0488">Methylation</keyword>
<keyword id="KW-0597">Phosphoprotein</keyword>
<keyword id="KW-1185">Reference proteome</keyword>
<keyword id="KW-0677">Repeat</keyword>
<keyword id="KW-0964">Secreted</keyword>
<keyword id="KW-0813">Transport</keyword>
<organism>
    <name type="scientific">Sus scrofa</name>
    <name type="common">Pig</name>
    <dbReference type="NCBI Taxonomy" id="9823"/>
    <lineage>
        <taxon>Eukaryota</taxon>
        <taxon>Metazoa</taxon>
        <taxon>Chordata</taxon>
        <taxon>Craniata</taxon>
        <taxon>Vertebrata</taxon>
        <taxon>Euteleostomi</taxon>
        <taxon>Mammalia</taxon>
        <taxon>Eutheria</taxon>
        <taxon>Laurasiatheria</taxon>
        <taxon>Artiodactyla</taxon>
        <taxon>Suina</taxon>
        <taxon>Suidae</taxon>
        <taxon>Sus</taxon>
    </lineage>
</organism>
<name>TRFE_PIG</name>
<evidence type="ECO:0000250" key="1">
    <source>
        <dbReference type="UniProtKB" id="P02787"/>
    </source>
</evidence>
<evidence type="ECO:0000250" key="2">
    <source>
        <dbReference type="UniProtKB" id="P12346"/>
    </source>
</evidence>
<evidence type="ECO:0000255" key="3"/>
<evidence type="ECO:0000255" key="4">
    <source>
        <dbReference type="PROSITE-ProRule" id="PRU00741"/>
    </source>
</evidence>
<evidence type="ECO:0000305" key="5"/>
<evidence type="ECO:0007829" key="6">
    <source>
        <dbReference type="PDB" id="1H76"/>
    </source>
</evidence>
<sequence length="696" mass="76968">VAQKTVRWCTISNQEANKCSSFRENMSKAVKNGPLVSCVKKSSYLDCIKAIRDKEADAVTLDAGLVFEAGLAPYNLKPVVAEFYGQKDNPQTHYYAVAVVKKGSNFQWNQLQGKRSCHTGLGRSAGWIIPMGLLYDQLPEPRKPIEKAVASFFSSSCVPCADPVNFPKLCQQCAGKGAEKCACSNHEPYFGYAGAFNCLKEDAGDVAFVKHSTVLENLPDKADRDQYELLCRDNTRRPVDDYENCYLAQVPSHAVVARSVDGQEDSIWELLNQAQEHFGRDKSPDFQLFSSSHGKDLLFKDSANGFLKIPSKMDSSLYLGYQYVTALRNLREEISPDSSKNECKKVRWCAIGHEETQKCDAWSINSGGKIECVSAENTEDCIAKIVKGEADAMSLDGGYIYIAGKCGLVPVLAENYKTEGENCVNTPEKGYLAVAVVKKSSGPDLNWNNLKGKKSCHTAVDRTAGWNIPMGLLYNKINSCKFDQFFGEGCAPGSQRNSSLCALCIGSERAPGRECLANNHERYYGYTGAFRCLVEKGDVAFVKDQVVQQNTDGKNKDDWAKDLKQMDFELLCQNGAREPVDNAENCHLARAPNHAVVARDDKVTCVAEELLKQQAQFGRHVTDCSSSFCMFKSNTKDLLFRDDTQCLARVGKTTYESYLGADYITAVANLRKCSTSKLLEACTFHSAKNPRVETTT</sequence>
<proteinExistence type="evidence at protein level"/>
<accession>P09571</accession>
<protein>
    <recommendedName>
        <fullName>Serotransferrin</fullName>
        <shortName>Transferrin</shortName>
    </recommendedName>
    <alternativeName>
        <fullName>Beta-1 metal-binding globulin</fullName>
    </alternativeName>
    <alternativeName>
        <fullName>Siderophilin</fullName>
    </alternativeName>
</protein>
<dbReference type="EMBL" id="X12386">
    <property type="protein sequence ID" value="CAA30943.1"/>
    <property type="molecule type" value="mRNA"/>
</dbReference>
<dbReference type="PIR" id="S01384">
    <property type="entry name" value="S01384"/>
</dbReference>
<dbReference type="PDB" id="1H76">
    <property type="method" value="X-ray"/>
    <property type="resolution" value="2.15 A"/>
    <property type="chains" value="A=1-696"/>
</dbReference>
<dbReference type="PDBsum" id="1H76"/>
<dbReference type="SMR" id="P09571"/>
<dbReference type="FunCoup" id="P09571">
    <property type="interactions" value="641"/>
</dbReference>
<dbReference type="STRING" id="9823.ENSSSCP00000074302"/>
<dbReference type="MEROPS" id="S60.970"/>
<dbReference type="GlyCosmos" id="P09571">
    <property type="glycosylation" value="2 sites, No reported glycans"/>
</dbReference>
<dbReference type="GlyGen" id="P09571">
    <property type="glycosylation" value="2 sites"/>
</dbReference>
<dbReference type="PaxDb" id="9823-ENSSSCP00000012406"/>
<dbReference type="PeptideAtlas" id="P09571"/>
<dbReference type="eggNOG" id="ENOG502QT0C">
    <property type="taxonomic scope" value="Eukaryota"/>
</dbReference>
<dbReference type="InParanoid" id="P09571"/>
<dbReference type="EvolutionaryTrace" id="P09571"/>
<dbReference type="Proteomes" id="UP000008227">
    <property type="component" value="Unplaced"/>
</dbReference>
<dbReference type="Proteomes" id="UP000314985">
    <property type="component" value="Unplaced"/>
</dbReference>
<dbReference type="Proteomes" id="UP000694570">
    <property type="component" value="Unplaced"/>
</dbReference>
<dbReference type="Proteomes" id="UP000694571">
    <property type="component" value="Unplaced"/>
</dbReference>
<dbReference type="Proteomes" id="UP000694720">
    <property type="component" value="Unplaced"/>
</dbReference>
<dbReference type="Proteomes" id="UP000694722">
    <property type="component" value="Unplaced"/>
</dbReference>
<dbReference type="Proteomes" id="UP000694723">
    <property type="component" value="Unplaced"/>
</dbReference>
<dbReference type="Proteomes" id="UP000694724">
    <property type="component" value="Unplaced"/>
</dbReference>
<dbReference type="Proteomes" id="UP000694725">
    <property type="component" value="Unplaced"/>
</dbReference>
<dbReference type="Proteomes" id="UP000694726">
    <property type="component" value="Unplaced"/>
</dbReference>
<dbReference type="Proteomes" id="UP000694727">
    <property type="component" value="Unplaced"/>
</dbReference>
<dbReference type="Proteomes" id="UP000694728">
    <property type="component" value="Unplaced"/>
</dbReference>
<dbReference type="GO" id="GO:0005769">
    <property type="term" value="C:early endosome"/>
    <property type="evidence" value="ECO:0000318"/>
    <property type="project" value="GO_Central"/>
</dbReference>
<dbReference type="GO" id="GO:0005615">
    <property type="term" value="C:extracellular space"/>
    <property type="evidence" value="ECO:0000318"/>
    <property type="project" value="GO_Central"/>
</dbReference>
<dbReference type="GO" id="GO:0005886">
    <property type="term" value="C:plasma membrane"/>
    <property type="evidence" value="ECO:0000318"/>
    <property type="project" value="GO_Central"/>
</dbReference>
<dbReference type="GO" id="GO:0055037">
    <property type="term" value="C:recycling endosome"/>
    <property type="evidence" value="ECO:0000318"/>
    <property type="project" value="GO_Central"/>
</dbReference>
<dbReference type="GO" id="GO:0008199">
    <property type="term" value="F:ferric iron binding"/>
    <property type="evidence" value="ECO:0007669"/>
    <property type="project" value="InterPro"/>
</dbReference>
<dbReference type="GO" id="GO:0019731">
    <property type="term" value="P:antibacterial humoral response"/>
    <property type="evidence" value="ECO:0000318"/>
    <property type="project" value="GO_Central"/>
</dbReference>
<dbReference type="GO" id="GO:0006879">
    <property type="term" value="P:intracellular iron ion homeostasis"/>
    <property type="evidence" value="ECO:0007669"/>
    <property type="project" value="InterPro"/>
</dbReference>
<dbReference type="GO" id="GO:0006826">
    <property type="term" value="P:iron ion transport"/>
    <property type="evidence" value="ECO:0000318"/>
    <property type="project" value="GO_Central"/>
</dbReference>
<dbReference type="CDD" id="cd13617">
    <property type="entry name" value="PBP2_transferrin_C"/>
    <property type="match status" value="1"/>
</dbReference>
<dbReference type="CDD" id="cd13618">
    <property type="entry name" value="PBP2_transferrin_N"/>
    <property type="match status" value="1"/>
</dbReference>
<dbReference type="FunFam" id="3.40.190.10:FF:000095">
    <property type="entry name" value="Lactotransferrin"/>
    <property type="match status" value="1"/>
</dbReference>
<dbReference type="FunFam" id="3.40.190.10:FF:000105">
    <property type="entry name" value="Serotransferrin"/>
    <property type="match status" value="1"/>
</dbReference>
<dbReference type="Gene3D" id="3.40.190.10">
    <property type="entry name" value="Periplasmic binding protein-like II"/>
    <property type="match status" value="4"/>
</dbReference>
<dbReference type="InterPro" id="IPR030685">
    <property type="entry name" value="Serotransferrin_mammal"/>
</dbReference>
<dbReference type="InterPro" id="IPR016357">
    <property type="entry name" value="Transferrin"/>
</dbReference>
<dbReference type="InterPro" id="IPR001156">
    <property type="entry name" value="Transferrin-like_dom"/>
</dbReference>
<dbReference type="InterPro" id="IPR018195">
    <property type="entry name" value="Transferrin_Fe_BS"/>
</dbReference>
<dbReference type="PANTHER" id="PTHR11485:SF31">
    <property type="entry name" value="SEROTRANSFERRIN"/>
    <property type="match status" value="1"/>
</dbReference>
<dbReference type="PANTHER" id="PTHR11485">
    <property type="entry name" value="TRANSFERRIN"/>
    <property type="match status" value="1"/>
</dbReference>
<dbReference type="Pfam" id="PF00405">
    <property type="entry name" value="Transferrin"/>
    <property type="match status" value="2"/>
</dbReference>
<dbReference type="PIRSF" id="PIRSF500682">
    <property type="entry name" value="Serotransferrin"/>
    <property type="match status" value="1"/>
</dbReference>
<dbReference type="PIRSF" id="PIRSF002549">
    <property type="entry name" value="Transferrin"/>
    <property type="match status" value="1"/>
</dbReference>
<dbReference type="PRINTS" id="PR00422">
    <property type="entry name" value="TRANSFERRIN"/>
</dbReference>
<dbReference type="SMART" id="SM00094">
    <property type="entry name" value="TR_FER"/>
    <property type="match status" value="2"/>
</dbReference>
<dbReference type="SUPFAM" id="SSF53850">
    <property type="entry name" value="Periplasmic binding protein-like II"/>
    <property type="match status" value="2"/>
</dbReference>
<dbReference type="PROSITE" id="PS00205">
    <property type="entry name" value="TRANSFERRIN_LIKE_1"/>
    <property type="match status" value="2"/>
</dbReference>
<dbReference type="PROSITE" id="PS00206">
    <property type="entry name" value="TRANSFERRIN_LIKE_2"/>
    <property type="match status" value="2"/>
</dbReference>
<dbReference type="PROSITE" id="PS00207">
    <property type="entry name" value="TRANSFERRIN_LIKE_3"/>
    <property type="match status" value="2"/>
</dbReference>
<dbReference type="PROSITE" id="PS51408">
    <property type="entry name" value="TRANSFERRIN_LIKE_4"/>
    <property type="match status" value="2"/>
</dbReference>